<protein>
    <recommendedName>
        <fullName>DNA-binding protein RHL1</fullName>
    </recommendedName>
    <alternativeName>
        <fullName>Protein ELONGATED HYPOCOTYL 7</fullName>
    </alternativeName>
    <alternativeName>
        <fullName>Protein ROOT HAIRLESS 1</fullName>
    </alternativeName>
</protein>
<accession>O81242</accession>
<accession>B3H502</accession>
<accession>Q9SBG7</accession>
<evidence type="ECO:0000256" key="1">
    <source>
        <dbReference type="SAM" id="MobiDB-lite"/>
    </source>
</evidence>
<evidence type="ECO:0000269" key="2">
    <source>
    </source>
</evidence>
<evidence type="ECO:0000269" key="3">
    <source>
    </source>
</evidence>
<evidence type="ECO:0000269" key="4">
    <source>
    </source>
</evidence>
<evidence type="ECO:0000269" key="5">
    <source>
    </source>
</evidence>
<evidence type="ECO:0000305" key="6"/>
<keyword id="KW-0025">Alternative splicing</keyword>
<keyword id="KW-0238">DNA-binding</keyword>
<keyword id="KW-0539">Nucleus</keyword>
<keyword id="KW-1185">Reference proteome</keyword>
<reference key="1">
    <citation type="journal article" date="1998" name="Genes Dev.">
        <title>The ROOT HAIRLESS 1 gene encodes a nuclear protein required for root hair initiation in Arabidopsis.</title>
        <authorList>
            <person name="Schneider K."/>
            <person name="Mathur J."/>
            <person name="Boudonck K."/>
            <person name="Wells B."/>
            <person name="Dolan L."/>
            <person name="Roberts K."/>
        </authorList>
    </citation>
    <scope>NUCLEOTIDE SEQUENCE [GENOMIC DNA / MRNA] (ISOFORM 1)</scope>
    <scope>TISSUE SPECIFICITY</scope>
    <scope>DISRUPTION PHENOTYPE</scope>
    <scope>SUBCELLULAR LOCATION</scope>
</reference>
<reference key="2">
    <citation type="journal article" date="2000" name="Nature">
        <title>Sequence and analysis of chromosome 1 of the plant Arabidopsis thaliana.</title>
        <authorList>
            <person name="Theologis A."/>
            <person name="Ecker J.R."/>
            <person name="Palm C.J."/>
            <person name="Federspiel N.A."/>
            <person name="Kaul S."/>
            <person name="White O."/>
            <person name="Alonso J."/>
            <person name="Altafi H."/>
            <person name="Araujo R."/>
            <person name="Bowman C.L."/>
            <person name="Brooks S.Y."/>
            <person name="Buehler E."/>
            <person name="Chan A."/>
            <person name="Chao Q."/>
            <person name="Chen H."/>
            <person name="Cheuk R.F."/>
            <person name="Chin C.W."/>
            <person name="Chung M.K."/>
            <person name="Conn L."/>
            <person name="Conway A.B."/>
            <person name="Conway A.R."/>
            <person name="Creasy T.H."/>
            <person name="Dewar K."/>
            <person name="Dunn P."/>
            <person name="Etgu P."/>
            <person name="Feldblyum T.V."/>
            <person name="Feng J.-D."/>
            <person name="Fong B."/>
            <person name="Fujii C.Y."/>
            <person name="Gill J.E."/>
            <person name="Goldsmith A.D."/>
            <person name="Haas B."/>
            <person name="Hansen N.F."/>
            <person name="Hughes B."/>
            <person name="Huizar L."/>
            <person name="Hunter J.L."/>
            <person name="Jenkins J."/>
            <person name="Johnson-Hopson C."/>
            <person name="Khan S."/>
            <person name="Khaykin E."/>
            <person name="Kim C.J."/>
            <person name="Koo H.L."/>
            <person name="Kremenetskaia I."/>
            <person name="Kurtz D.B."/>
            <person name="Kwan A."/>
            <person name="Lam B."/>
            <person name="Langin-Hooper S."/>
            <person name="Lee A."/>
            <person name="Lee J.M."/>
            <person name="Lenz C.A."/>
            <person name="Li J.H."/>
            <person name="Li Y.-P."/>
            <person name="Lin X."/>
            <person name="Liu S.X."/>
            <person name="Liu Z.A."/>
            <person name="Luros J.S."/>
            <person name="Maiti R."/>
            <person name="Marziali A."/>
            <person name="Militscher J."/>
            <person name="Miranda M."/>
            <person name="Nguyen M."/>
            <person name="Nierman W.C."/>
            <person name="Osborne B.I."/>
            <person name="Pai G."/>
            <person name="Peterson J."/>
            <person name="Pham P.K."/>
            <person name="Rizzo M."/>
            <person name="Rooney T."/>
            <person name="Rowley D."/>
            <person name="Sakano H."/>
            <person name="Salzberg S.L."/>
            <person name="Schwartz J.R."/>
            <person name="Shinn P."/>
            <person name="Southwick A.M."/>
            <person name="Sun H."/>
            <person name="Tallon L.J."/>
            <person name="Tambunga G."/>
            <person name="Toriumi M.J."/>
            <person name="Town C.D."/>
            <person name="Utterback T."/>
            <person name="Van Aken S."/>
            <person name="Vaysberg M."/>
            <person name="Vysotskaia V.S."/>
            <person name="Walker M."/>
            <person name="Wu D."/>
            <person name="Yu G."/>
            <person name="Fraser C.M."/>
            <person name="Venter J.C."/>
            <person name="Davis R.W."/>
        </authorList>
    </citation>
    <scope>NUCLEOTIDE SEQUENCE [LARGE SCALE GENOMIC DNA]</scope>
    <source>
        <strain>cv. Columbia</strain>
    </source>
</reference>
<reference key="3">
    <citation type="journal article" date="2017" name="Plant J.">
        <title>Araport11: a complete reannotation of the Arabidopsis thaliana reference genome.</title>
        <authorList>
            <person name="Cheng C.Y."/>
            <person name="Krishnakumar V."/>
            <person name="Chan A.P."/>
            <person name="Thibaud-Nissen F."/>
            <person name="Schobel S."/>
            <person name="Town C.D."/>
        </authorList>
    </citation>
    <scope>GENOME REANNOTATION</scope>
    <source>
        <strain>cv. Columbia</strain>
    </source>
</reference>
<reference key="4">
    <citation type="journal article" date="2003" name="Science">
        <title>Empirical analysis of transcriptional activity in the Arabidopsis genome.</title>
        <authorList>
            <person name="Yamada K."/>
            <person name="Lim J."/>
            <person name="Dale J.M."/>
            <person name="Chen H."/>
            <person name="Shinn P."/>
            <person name="Palm C.J."/>
            <person name="Southwick A.M."/>
            <person name="Wu H.C."/>
            <person name="Kim C.J."/>
            <person name="Nguyen M."/>
            <person name="Pham P.K."/>
            <person name="Cheuk R.F."/>
            <person name="Karlin-Newmann G."/>
            <person name="Liu S.X."/>
            <person name="Lam B."/>
            <person name="Sakano H."/>
            <person name="Wu T."/>
            <person name="Yu G."/>
            <person name="Miranda M."/>
            <person name="Quach H.L."/>
            <person name="Tripp M."/>
            <person name="Chang C.H."/>
            <person name="Lee J.M."/>
            <person name="Toriumi M.J."/>
            <person name="Chan M.M."/>
            <person name="Tang C.C."/>
            <person name="Onodera C.S."/>
            <person name="Deng J.M."/>
            <person name="Akiyama K."/>
            <person name="Ansari Y."/>
            <person name="Arakawa T."/>
            <person name="Banh J."/>
            <person name="Banno F."/>
            <person name="Bowser L."/>
            <person name="Brooks S.Y."/>
            <person name="Carninci P."/>
            <person name="Chao Q."/>
            <person name="Choy N."/>
            <person name="Enju A."/>
            <person name="Goldsmith A.D."/>
            <person name="Gurjal M."/>
            <person name="Hansen N.F."/>
            <person name="Hayashizaki Y."/>
            <person name="Johnson-Hopson C."/>
            <person name="Hsuan V.W."/>
            <person name="Iida K."/>
            <person name="Karnes M."/>
            <person name="Khan S."/>
            <person name="Koesema E."/>
            <person name="Ishida J."/>
            <person name="Jiang P.X."/>
            <person name="Jones T."/>
            <person name="Kawai J."/>
            <person name="Kamiya A."/>
            <person name="Meyers C."/>
            <person name="Nakajima M."/>
            <person name="Narusaka M."/>
            <person name="Seki M."/>
            <person name="Sakurai T."/>
            <person name="Satou M."/>
            <person name="Tamse R."/>
            <person name="Vaysberg M."/>
            <person name="Wallender E.K."/>
            <person name="Wong C."/>
            <person name="Yamamura Y."/>
            <person name="Yuan S."/>
            <person name="Shinozaki K."/>
            <person name="Davis R.W."/>
            <person name="Theologis A."/>
            <person name="Ecker J.R."/>
        </authorList>
    </citation>
    <scope>NUCLEOTIDE SEQUENCE [LARGE SCALE MRNA] (ISOFORM 1)</scope>
    <source>
        <strain>cv. Columbia</strain>
    </source>
</reference>
<reference key="5">
    <citation type="journal article" date="2005" name="Proc. Natl. Acad. Sci. U.S.A.">
        <title>RHL1 is an essential component of the plant DNA topoisomerase VI complex and is required for ploidy-dependent cell growth.</title>
        <authorList>
            <person name="Sugimoto-Shirasu K."/>
            <person name="Roberts G.R."/>
            <person name="Stacey N.J."/>
            <person name="McCann M.C."/>
            <person name="Maxwell A."/>
            <person name="Roberts K."/>
        </authorList>
    </citation>
    <scope>FUNCTION</scope>
    <scope>MUTAGENESIS OF GLY-79</scope>
    <scope>INTERACTION WITH TOP6A AND TOP6B</scope>
</reference>
<reference key="6">
    <citation type="journal article" date="2007" name="Plant Cell">
        <title>MIDGET unravels functions of the Arabidopsis topoisomerase VI complex in DNA endoreduplication, chromatin condensation, and transcriptional silencing.</title>
        <authorList>
            <person name="Kirik V."/>
            <person name="Schrader A."/>
            <person name="Uhrig J.F."/>
            <person name="Hulskamp M."/>
        </authorList>
    </citation>
    <scope>INTERACTION WITH BIN4</scope>
</reference>
<reference key="7">
    <citation type="journal article" date="2007" name="Plant Cell">
        <title>BIN4, a novel component of the plant DNA topoisomerase VI complex, is required for endoreduplication in Arabidopsis.</title>
        <authorList>
            <person name="Breuer C."/>
            <person name="Stacey N.J."/>
            <person name="West C.E."/>
            <person name="Zhao Y."/>
            <person name="Chory J."/>
            <person name="Tsukaya H."/>
            <person name="Azumi Y."/>
            <person name="Maxwell A."/>
            <person name="Roberts K."/>
            <person name="Sugimoto-Shirasu K."/>
        </authorList>
    </citation>
    <scope>INTERACTION WITH BIN4</scope>
</reference>
<dbReference type="EMBL" id="AF062371">
    <property type="protein sequence ID" value="AAC23500.1"/>
    <property type="molecule type" value="mRNA"/>
</dbReference>
<dbReference type="EMBL" id="AF062372">
    <property type="protein sequence ID" value="AAC69460.1"/>
    <property type="molecule type" value="Genomic_DNA"/>
</dbReference>
<dbReference type="EMBL" id="AC007932">
    <property type="protein sequence ID" value="AAD49759.1"/>
    <property type="molecule type" value="Genomic_DNA"/>
</dbReference>
<dbReference type="EMBL" id="CP002684">
    <property type="protein sequence ID" value="AEE32282.1"/>
    <property type="molecule type" value="Genomic_DNA"/>
</dbReference>
<dbReference type="EMBL" id="CP002684">
    <property type="protein sequence ID" value="AEE32283.1"/>
    <property type="molecule type" value="Genomic_DNA"/>
</dbReference>
<dbReference type="EMBL" id="AY057707">
    <property type="protein sequence ID" value="AAL15337.1"/>
    <property type="molecule type" value="mRNA"/>
</dbReference>
<dbReference type="EMBL" id="AY133623">
    <property type="protein sequence ID" value="AAM91453.1"/>
    <property type="molecule type" value="mRNA"/>
</dbReference>
<dbReference type="PIR" id="T52177">
    <property type="entry name" value="T52177"/>
</dbReference>
<dbReference type="RefSeq" id="NP_001117449.1">
    <molecule id="O81242-2"/>
    <property type="nucleotide sequence ID" value="NM_001123977.1"/>
</dbReference>
<dbReference type="RefSeq" id="NP_564526.1">
    <molecule id="O81242-1"/>
    <property type="nucleotide sequence ID" value="NM_103734.3"/>
</dbReference>
<dbReference type="FunCoup" id="O81242">
    <property type="interactions" value="1778"/>
</dbReference>
<dbReference type="IntAct" id="O81242">
    <property type="interactions" value="2"/>
</dbReference>
<dbReference type="STRING" id="3702.O81242"/>
<dbReference type="iPTMnet" id="O81242"/>
<dbReference type="PaxDb" id="3702-AT1G48380.2"/>
<dbReference type="ProteomicsDB" id="236916">
    <molecule id="O81242-1"/>
</dbReference>
<dbReference type="EnsemblPlants" id="AT1G48380.1">
    <molecule id="O81242-1"/>
    <property type="protein sequence ID" value="AT1G48380.1"/>
    <property type="gene ID" value="AT1G48380"/>
</dbReference>
<dbReference type="EnsemblPlants" id="AT1G48380.2">
    <molecule id="O81242-2"/>
    <property type="protein sequence ID" value="AT1G48380.2"/>
    <property type="gene ID" value="AT1G48380"/>
</dbReference>
<dbReference type="GeneID" id="841258"/>
<dbReference type="Gramene" id="AT1G48380.1">
    <molecule id="O81242-1"/>
    <property type="protein sequence ID" value="AT1G48380.1"/>
    <property type="gene ID" value="AT1G48380"/>
</dbReference>
<dbReference type="Gramene" id="AT1G48380.2">
    <molecule id="O81242-2"/>
    <property type="protein sequence ID" value="AT1G48380.2"/>
    <property type="gene ID" value="AT1G48380"/>
</dbReference>
<dbReference type="KEGG" id="ath:AT1G48380"/>
<dbReference type="Araport" id="AT1G48380"/>
<dbReference type="TAIR" id="AT1G48380">
    <property type="gene designation" value="RHL1"/>
</dbReference>
<dbReference type="eggNOG" id="ENOG502QVIA">
    <property type="taxonomic scope" value="Eukaryota"/>
</dbReference>
<dbReference type="HOGENOM" id="CLU_040605_0_0_1"/>
<dbReference type="InParanoid" id="O81242"/>
<dbReference type="OMA" id="ITTWTMI"/>
<dbReference type="PhylomeDB" id="O81242"/>
<dbReference type="CD-CODE" id="4299E36E">
    <property type="entry name" value="Nucleolus"/>
</dbReference>
<dbReference type="PRO" id="PR:O81242"/>
<dbReference type="Proteomes" id="UP000006548">
    <property type="component" value="Chromosome 1"/>
</dbReference>
<dbReference type="ExpressionAtlas" id="O81242">
    <property type="expression patterns" value="baseline and differential"/>
</dbReference>
<dbReference type="GO" id="GO:0005730">
    <property type="term" value="C:nucleolus"/>
    <property type="evidence" value="ECO:0000314"/>
    <property type="project" value="TAIR"/>
</dbReference>
<dbReference type="GO" id="GO:0003677">
    <property type="term" value="F:DNA binding"/>
    <property type="evidence" value="ECO:0000314"/>
    <property type="project" value="TAIR"/>
</dbReference>
<dbReference type="GO" id="GO:0042023">
    <property type="term" value="P:DNA endoreduplication"/>
    <property type="evidence" value="ECO:0000315"/>
    <property type="project" value="TAIR"/>
</dbReference>
<dbReference type="GO" id="GO:0048766">
    <property type="term" value="P:root hair initiation"/>
    <property type="evidence" value="ECO:0000315"/>
    <property type="project" value="TAIR"/>
</dbReference>
<dbReference type="InterPro" id="IPR038859">
    <property type="entry name" value="RHL1"/>
</dbReference>
<dbReference type="PANTHER" id="PTHR35698">
    <property type="entry name" value="DNA-BINDING PROTEIN RHL1"/>
    <property type="match status" value="1"/>
</dbReference>
<dbReference type="PANTHER" id="PTHR35698:SF2">
    <property type="entry name" value="DNA-BINDING PROTEIN RHL1"/>
    <property type="match status" value="1"/>
</dbReference>
<organism>
    <name type="scientific">Arabidopsis thaliana</name>
    <name type="common">Mouse-ear cress</name>
    <dbReference type="NCBI Taxonomy" id="3702"/>
    <lineage>
        <taxon>Eukaryota</taxon>
        <taxon>Viridiplantae</taxon>
        <taxon>Streptophyta</taxon>
        <taxon>Embryophyta</taxon>
        <taxon>Tracheophyta</taxon>
        <taxon>Spermatophyta</taxon>
        <taxon>Magnoliopsida</taxon>
        <taxon>eudicotyledons</taxon>
        <taxon>Gunneridae</taxon>
        <taxon>Pentapetalae</taxon>
        <taxon>rosids</taxon>
        <taxon>malvids</taxon>
        <taxon>Brassicales</taxon>
        <taxon>Brassicaceae</taxon>
        <taxon>Camelineae</taxon>
        <taxon>Arabidopsis</taxon>
    </lineage>
</organism>
<feature type="chain" id="PRO_0000346108" description="DNA-binding protein RHL1">
    <location>
        <begin position="1"/>
        <end position="355"/>
    </location>
</feature>
<feature type="region of interest" description="Disordered" evidence="1">
    <location>
        <begin position="1"/>
        <end position="26"/>
    </location>
</feature>
<feature type="region of interest" description="Disordered" evidence="1">
    <location>
        <begin position="181"/>
        <end position="215"/>
    </location>
</feature>
<feature type="region of interest" description="Disordered" evidence="1">
    <location>
        <begin position="229"/>
        <end position="355"/>
    </location>
</feature>
<feature type="compositionally biased region" description="Basic and acidic residues" evidence="1">
    <location>
        <begin position="14"/>
        <end position="23"/>
    </location>
</feature>
<feature type="compositionally biased region" description="Low complexity" evidence="1">
    <location>
        <begin position="230"/>
        <end position="246"/>
    </location>
</feature>
<feature type="compositionally biased region" description="Low complexity" evidence="1">
    <location>
        <begin position="260"/>
        <end position="274"/>
    </location>
</feature>
<feature type="compositionally biased region" description="Basic and acidic residues" evidence="1">
    <location>
        <begin position="281"/>
        <end position="296"/>
    </location>
</feature>
<feature type="compositionally biased region" description="Basic and acidic residues" evidence="1">
    <location>
        <begin position="309"/>
        <end position="326"/>
    </location>
</feature>
<feature type="compositionally biased region" description="Low complexity" evidence="1">
    <location>
        <begin position="344"/>
        <end position="355"/>
    </location>
</feature>
<feature type="splice variant" id="VSP_034979" description="In isoform 2." evidence="6">
    <original>A</original>
    <variation>AQVDTFHLFLHFLFKTMVATEMFNMIRRILWF</variation>
    <location>
        <position position="173"/>
    </location>
</feature>
<feature type="mutagenesis site" description="In hyp7/rhl1-2; dwarf and reduced ploidy phenotype, but DNA binding only slightly reduced." evidence="2">
    <original>G</original>
    <variation>D</variation>
    <location>
        <position position="79"/>
    </location>
</feature>
<feature type="sequence conflict" description="In Ref. 1; AAC69460." evidence="6" ref="1">
    <original>S</original>
    <variation>T</variation>
    <location>
        <position position="52"/>
    </location>
</feature>
<name>RHL1_ARATH</name>
<sequence>MVRASSSKKGGSKGGDKDDAESKQRKRLKTLALDNQLLSDSPAKSHSSLKPSKQVLKHHGTDIIRKSQRKNRFLFSFPGLLAPISAATIGDLDRLSTKNPVLYLNFPQGRMKLFGTILYPKNRYLTLQFSRGGKNVLCDDYFDNMIVFSESWWIGTKEENPEEARLDFPKELAQAENTEFDFQGGAGGAASVKKLASPEIGSQPTETDSPEVDNEDVLSEDGEFLDDKIQVTPPVQLTPPVQVTPVRQSQRNSGKKFNFAETSSEASSGESEGNTSDEDEKPLLEPESSTRSREESQDGNGITASASKLPEELPAKREKLKSKDSKLVQATLSNLFKKAEEKTAGTSKAKSSSKA</sequence>
<proteinExistence type="evidence at protein level"/>
<gene>
    <name type="primary">RHL1</name>
    <name type="synonym">HYP7</name>
    <name type="ordered locus">At1g48380</name>
    <name type="ORF">F11A17.7</name>
</gene>
<comment type="function">
    <text evidence="2">Component of the DNA topoisomerase VI complex involved in chromatin organization and progression of endoreduplication cycles. Binds to DNA. Required for endoreduplication beyond 8C.</text>
</comment>
<comment type="subunit">
    <text evidence="2 3 4">Interacts with BIN4 and TOP6A, but not with TOP6B.</text>
</comment>
<comment type="interaction">
    <interactant intactId="EBI-1772159">
        <id>O81242</id>
    </interactant>
    <interactant intactId="EBI-1772104">
        <id>Q9LZ03</id>
        <label>TOP6A</label>
    </interactant>
    <organismsDiffer>false</organismsDiffer>
    <experiments>2</experiments>
</comment>
<comment type="subcellular location">
    <subcellularLocation>
        <location evidence="5">Nucleus</location>
    </subcellularLocation>
</comment>
<comment type="alternative products">
    <event type="alternative splicing"/>
    <isoform>
        <id>O81242-1</id>
        <name>1</name>
        <sequence type="displayed"/>
    </isoform>
    <isoform>
        <id>O81242-2</id>
        <name>2</name>
        <sequence type="described" ref="VSP_034979"/>
    </isoform>
</comment>
<comment type="tissue specificity">
    <text evidence="5">Expressed inproliferating and endoreduplicating cells.</text>
</comment>
<comment type="disruption phenotype">
    <text evidence="5">Plants have no hairs on primary roots and have an extreme dwarf and seedling lethal phenotype.</text>
</comment>